<evidence type="ECO:0000255" key="1">
    <source>
        <dbReference type="HAMAP-Rule" id="MF_00201"/>
    </source>
</evidence>
<name>RECO_CUTAK</name>
<sequence>MPTYRDQAVVLRTHKLGEADRIVSMLSREHGKIRAVARGIRRTSSKFGARLDPFNLVDLQLVQGRNLDVVAQVECLHPYSAPLRQDYSLFTAAEVMVEAADHLVPVDREPAPAQYRLLAGALRVLGQGTTDGPRPPEMVLDSYLLRSLSASGYAPDLVDCVRCGTPGPHQGFSPSLGGVVCINCQPPGTPHPHEETISYLRALLVGDWTATRDVAWSRVREGSGLVAAFVSWHMDRGLRSMPLLER</sequence>
<accession>Q6A969</accession>
<dbReference type="EMBL" id="AE017283">
    <property type="protein sequence ID" value="AAT82697.1"/>
    <property type="molecule type" value="Genomic_DNA"/>
</dbReference>
<dbReference type="RefSeq" id="WP_002513778.1">
    <property type="nucleotide sequence ID" value="NZ_CP025935.1"/>
</dbReference>
<dbReference type="SMR" id="Q6A969"/>
<dbReference type="EnsemblBacteria" id="AAT82697">
    <property type="protein sequence ID" value="AAT82697"/>
    <property type="gene ID" value="PPA0944"/>
</dbReference>
<dbReference type="GeneID" id="92856908"/>
<dbReference type="KEGG" id="pac:PPA0944"/>
<dbReference type="eggNOG" id="COG1381">
    <property type="taxonomic scope" value="Bacteria"/>
</dbReference>
<dbReference type="HOGENOM" id="CLU_066632_1_1_11"/>
<dbReference type="Proteomes" id="UP000000603">
    <property type="component" value="Chromosome"/>
</dbReference>
<dbReference type="GO" id="GO:0043590">
    <property type="term" value="C:bacterial nucleoid"/>
    <property type="evidence" value="ECO:0007669"/>
    <property type="project" value="TreeGrafter"/>
</dbReference>
<dbReference type="GO" id="GO:0006310">
    <property type="term" value="P:DNA recombination"/>
    <property type="evidence" value="ECO:0007669"/>
    <property type="project" value="UniProtKB-UniRule"/>
</dbReference>
<dbReference type="GO" id="GO:0006302">
    <property type="term" value="P:double-strand break repair"/>
    <property type="evidence" value="ECO:0007669"/>
    <property type="project" value="TreeGrafter"/>
</dbReference>
<dbReference type="Gene3D" id="2.40.50.140">
    <property type="entry name" value="Nucleic acid-binding proteins"/>
    <property type="match status" value="1"/>
</dbReference>
<dbReference type="Gene3D" id="1.20.1440.120">
    <property type="entry name" value="Recombination protein O, C-terminal domain"/>
    <property type="match status" value="1"/>
</dbReference>
<dbReference type="HAMAP" id="MF_00201">
    <property type="entry name" value="RecO"/>
    <property type="match status" value="1"/>
</dbReference>
<dbReference type="InterPro" id="IPR037278">
    <property type="entry name" value="ARFGAP/RecO"/>
</dbReference>
<dbReference type="InterPro" id="IPR022572">
    <property type="entry name" value="DNA_rep/recomb_RecO_N"/>
</dbReference>
<dbReference type="InterPro" id="IPR012340">
    <property type="entry name" value="NA-bd_OB-fold"/>
</dbReference>
<dbReference type="InterPro" id="IPR003717">
    <property type="entry name" value="RecO"/>
</dbReference>
<dbReference type="InterPro" id="IPR042242">
    <property type="entry name" value="RecO_C"/>
</dbReference>
<dbReference type="NCBIfam" id="TIGR00613">
    <property type="entry name" value="reco"/>
    <property type="match status" value="1"/>
</dbReference>
<dbReference type="PANTHER" id="PTHR33991">
    <property type="entry name" value="DNA REPAIR PROTEIN RECO"/>
    <property type="match status" value="1"/>
</dbReference>
<dbReference type="PANTHER" id="PTHR33991:SF1">
    <property type="entry name" value="DNA REPAIR PROTEIN RECO"/>
    <property type="match status" value="1"/>
</dbReference>
<dbReference type="Pfam" id="PF02565">
    <property type="entry name" value="RecO_C"/>
    <property type="match status" value="1"/>
</dbReference>
<dbReference type="Pfam" id="PF11967">
    <property type="entry name" value="RecO_N"/>
    <property type="match status" value="1"/>
</dbReference>
<dbReference type="SUPFAM" id="SSF57863">
    <property type="entry name" value="ArfGap/RecO-like zinc finger"/>
    <property type="match status" value="1"/>
</dbReference>
<dbReference type="SUPFAM" id="SSF50249">
    <property type="entry name" value="Nucleic acid-binding proteins"/>
    <property type="match status" value="1"/>
</dbReference>
<organism>
    <name type="scientific">Cutibacterium acnes (strain DSM 16379 / KPA171202)</name>
    <name type="common">Propionibacterium acnes</name>
    <dbReference type="NCBI Taxonomy" id="267747"/>
    <lineage>
        <taxon>Bacteria</taxon>
        <taxon>Bacillati</taxon>
        <taxon>Actinomycetota</taxon>
        <taxon>Actinomycetes</taxon>
        <taxon>Propionibacteriales</taxon>
        <taxon>Propionibacteriaceae</taxon>
        <taxon>Cutibacterium</taxon>
    </lineage>
</organism>
<protein>
    <recommendedName>
        <fullName evidence="1">DNA repair protein RecO</fullName>
    </recommendedName>
    <alternativeName>
        <fullName evidence="1">Recombination protein O</fullName>
    </alternativeName>
</protein>
<gene>
    <name evidence="1" type="primary">recO</name>
    <name type="ordered locus">PPA0944</name>
</gene>
<feature type="chain" id="PRO_0000204981" description="DNA repair protein RecO">
    <location>
        <begin position="1"/>
        <end position="246"/>
    </location>
</feature>
<proteinExistence type="inferred from homology"/>
<keyword id="KW-0227">DNA damage</keyword>
<keyword id="KW-0233">DNA recombination</keyword>
<keyword id="KW-0234">DNA repair</keyword>
<reference key="1">
    <citation type="journal article" date="2004" name="Science">
        <title>The complete genome sequence of Propionibacterium acnes, a commensal of human skin.</title>
        <authorList>
            <person name="Brueggemann H."/>
            <person name="Henne A."/>
            <person name="Hoster F."/>
            <person name="Liesegang H."/>
            <person name="Wiezer A."/>
            <person name="Strittmatter A."/>
            <person name="Hujer S."/>
            <person name="Duerre P."/>
            <person name="Gottschalk G."/>
        </authorList>
    </citation>
    <scope>NUCLEOTIDE SEQUENCE [LARGE SCALE GENOMIC DNA]</scope>
    <source>
        <strain>DSM 16379 / KPA171202</strain>
    </source>
</reference>
<comment type="function">
    <text evidence="1">Involved in DNA repair and RecF pathway recombination.</text>
</comment>
<comment type="similarity">
    <text evidence="1">Belongs to the RecO family.</text>
</comment>